<dbReference type="EMBL" id="AB179294">
    <property type="protein sequence ID" value="BAE02345.1"/>
    <property type="molecule type" value="mRNA"/>
</dbReference>
<dbReference type="RefSeq" id="NP_001271999.1">
    <property type="nucleotide sequence ID" value="NM_001285070.1"/>
</dbReference>
<dbReference type="SMR" id="Q4R3H2"/>
<dbReference type="STRING" id="9541.ENSMFAP00000031529"/>
<dbReference type="MEROPS" id="T01.976"/>
<dbReference type="GlyCosmos" id="Q4R3H2">
    <property type="glycosylation" value="1 site, No reported glycans"/>
</dbReference>
<dbReference type="eggNOG" id="KOG0863">
    <property type="taxonomic scope" value="Eukaryota"/>
</dbReference>
<dbReference type="Proteomes" id="UP000233100">
    <property type="component" value="Unplaced"/>
</dbReference>
<dbReference type="GO" id="GO:0005737">
    <property type="term" value="C:cytoplasm"/>
    <property type="evidence" value="ECO:0007669"/>
    <property type="project" value="UniProtKB-SubCell"/>
</dbReference>
<dbReference type="GO" id="GO:0005634">
    <property type="term" value="C:nucleus"/>
    <property type="evidence" value="ECO:0007669"/>
    <property type="project" value="UniProtKB-SubCell"/>
</dbReference>
<dbReference type="GO" id="GO:0005839">
    <property type="term" value="C:proteasome core complex"/>
    <property type="evidence" value="ECO:0000250"/>
    <property type="project" value="UniProtKB"/>
</dbReference>
<dbReference type="GO" id="GO:0019773">
    <property type="term" value="C:proteasome core complex, alpha-subunit complex"/>
    <property type="evidence" value="ECO:0000250"/>
    <property type="project" value="UniProtKB"/>
</dbReference>
<dbReference type="GO" id="GO:0002376">
    <property type="term" value="P:immune system process"/>
    <property type="evidence" value="ECO:0007669"/>
    <property type="project" value="UniProtKB-KW"/>
</dbReference>
<dbReference type="GO" id="GO:0006511">
    <property type="term" value="P:ubiquitin-dependent protein catabolic process"/>
    <property type="evidence" value="ECO:0007669"/>
    <property type="project" value="InterPro"/>
</dbReference>
<dbReference type="CDD" id="cd03749">
    <property type="entry name" value="proteasome_alpha_type_1"/>
    <property type="match status" value="1"/>
</dbReference>
<dbReference type="FunFam" id="3.60.20.10:FF:000025">
    <property type="entry name" value="Proteasome subunit alpha type"/>
    <property type="match status" value="1"/>
</dbReference>
<dbReference type="Gene3D" id="3.60.20.10">
    <property type="entry name" value="Glutamine Phosphoribosylpyrophosphate, subunit 1, domain 1"/>
    <property type="match status" value="1"/>
</dbReference>
<dbReference type="InterPro" id="IPR029055">
    <property type="entry name" value="Ntn_hydrolases_N"/>
</dbReference>
<dbReference type="InterPro" id="IPR050115">
    <property type="entry name" value="Proteasome_alpha"/>
</dbReference>
<dbReference type="InterPro" id="IPR023332">
    <property type="entry name" value="Proteasome_alpha-type"/>
</dbReference>
<dbReference type="InterPro" id="IPR035144">
    <property type="entry name" value="Proteasome_alpha1"/>
</dbReference>
<dbReference type="InterPro" id="IPR000426">
    <property type="entry name" value="Proteasome_asu_N"/>
</dbReference>
<dbReference type="InterPro" id="IPR001353">
    <property type="entry name" value="Proteasome_sua/b"/>
</dbReference>
<dbReference type="PANTHER" id="PTHR11599">
    <property type="entry name" value="PROTEASOME SUBUNIT ALPHA/BETA"/>
    <property type="match status" value="1"/>
</dbReference>
<dbReference type="Pfam" id="PF00227">
    <property type="entry name" value="Proteasome"/>
    <property type="match status" value="1"/>
</dbReference>
<dbReference type="Pfam" id="PF10584">
    <property type="entry name" value="Proteasome_A_N"/>
    <property type="match status" value="1"/>
</dbReference>
<dbReference type="SMART" id="SM00948">
    <property type="entry name" value="Proteasome_A_N"/>
    <property type="match status" value="1"/>
</dbReference>
<dbReference type="SUPFAM" id="SSF56235">
    <property type="entry name" value="N-terminal nucleophile aminohydrolases (Ntn hydrolases)"/>
    <property type="match status" value="1"/>
</dbReference>
<dbReference type="PROSITE" id="PS00388">
    <property type="entry name" value="PROTEASOME_ALPHA_1"/>
    <property type="match status" value="1"/>
</dbReference>
<dbReference type="PROSITE" id="PS51475">
    <property type="entry name" value="PROTEASOME_ALPHA_2"/>
    <property type="match status" value="1"/>
</dbReference>
<evidence type="ECO:0000250" key="1"/>
<evidence type="ECO:0000250" key="2">
    <source>
        <dbReference type="UniProtKB" id="P18420"/>
    </source>
</evidence>
<evidence type="ECO:0000250" key="3">
    <source>
        <dbReference type="UniProtKB" id="P25786"/>
    </source>
</evidence>
<evidence type="ECO:0000255" key="4">
    <source>
        <dbReference type="PROSITE-ProRule" id="PRU00808"/>
    </source>
</evidence>
<evidence type="ECO:0000256" key="5">
    <source>
        <dbReference type="SAM" id="MobiDB-lite"/>
    </source>
</evidence>
<feature type="chain" id="PRO_0000124061" description="Proteasome subunit alpha type-1">
    <location>
        <begin position="1"/>
        <end position="263"/>
    </location>
</feature>
<feature type="region of interest" description="Disordered" evidence="5">
    <location>
        <begin position="232"/>
        <end position="263"/>
    </location>
</feature>
<feature type="compositionally biased region" description="Basic and acidic residues" evidence="5">
    <location>
        <begin position="253"/>
        <end position="263"/>
    </location>
</feature>
<feature type="modified residue" description="N-acetylmethionine" evidence="2">
    <location>
        <position position="1"/>
    </location>
</feature>
<feature type="modified residue" description="Phosphoserine; alternate" evidence="3">
    <location>
        <position position="110"/>
    </location>
</feature>
<feature type="modified residue" description="Phosphoserine" evidence="3">
    <location>
        <position position="177"/>
    </location>
</feature>
<feature type="glycosylation site" description="O-linked (GlcNAc) serine; alternate" evidence="1">
    <location>
        <position position="110"/>
    </location>
</feature>
<feature type="cross-link" description="Glycyl lysine isopeptide (Lys-Gly) (interchain with G-Cter in ubiquitin)" evidence="3">
    <location>
        <position position="115"/>
    </location>
</feature>
<feature type="cross-link" description="Glycyl lysine isopeptide (Lys-Gly) (interchain with G-Cter in ubiquitin)" evidence="3">
    <location>
        <position position="208"/>
    </location>
</feature>
<proteinExistence type="evidence at transcript level"/>
<keyword id="KW-0007">Acetylation</keyword>
<keyword id="KW-0963">Cytoplasm</keyword>
<keyword id="KW-0325">Glycoprotein</keyword>
<keyword id="KW-0391">Immunity</keyword>
<keyword id="KW-1017">Isopeptide bond</keyword>
<keyword id="KW-0539">Nucleus</keyword>
<keyword id="KW-0597">Phosphoprotein</keyword>
<keyword id="KW-0647">Proteasome</keyword>
<keyword id="KW-1185">Reference proteome</keyword>
<keyword id="KW-0832">Ubl conjugation</keyword>
<protein>
    <recommendedName>
        <fullName>Proteasome subunit alpha type-1</fullName>
    </recommendedName>
</protein>
<accession>Q4R3H2</accession>
<comment type="function">
    <text evidence="3">Component of the 20S core proteasome complex involved in the proteolytic degradation of most intracellular proteins. This complex plays numerous essential roles within the cell by associating with different regulatory particles. Associated with two 19S regulatory particles, forms the 26S proteasome and thus participates in the ATP-dependent degradation of ubiquitinated proteins. The 26S proteasome plays a key role in the maintenance of protein homeostasis by removing misfolded or damaged proteins that could impair cellular functions, and by removing proteins whose functions are no longer required. Associated with the PA200 or PA28, the 20S proteasome mediates ubiquitin-independent protein degradation. This type of proteolysis is required in several pathways including spermatogenesis (20S-PA200 complex) or generation of a subset of MHC class I-presented antigenic peptides (20S-PA28 complex).</text>
</comment>
<comment type="subunit">
    <text evidence="3">The 26S proteasome consists of a 20S proteasome core and two 19S regulatory subunits. The 20S proteasome core is a barrel-shaped complex made of 28 subunits that are arranged in four stacked rings. The two outer rings are each formed by seven alpha subunits, and the two inner rings are formed by seven beta subunits. The proteolytic activity is exerted by three beta-subunits PSMB5, PSMB6 and PSMB7. Interacts with NOTCH3. Interacts with ZFAND1 (By similarity).</text>
</comment>
<comment type="subcellular location">
    <subcellularLocation>
        <location evidence="3">Cytoplasm</location>
    </subcellularLocation>
    <subcellularLocation>
        <location evidence="3">Nucleus</location>
    </subcellularLocation>
    <text evidence="3">Translocated from the cytoplasm into the nucleus following interaction with AKIRIN2, which bridges the proteasome with the nuclear import receptor IPO9.</text>
</comment>
<comment type="similarity">
    <text evidence="4">Belongs to the peptidase T1A family.</text>
</comment>
<sequence length="263" mass="29584">MFRNQYDNDVTVWSPQGRIHQIEYAMEAVKQGSATVGLKSKTHAVLVALKRAQSELAAHRKKILHVDNHIGISIAGLTADARLLCNFMRQECLDSRFVFDRPLPVSRLVSLIGSKTQIPTQRYGRRPYGVGLLIAGYDDMGPHIFQTCPSANYFDCRAMSIGARSQSARTYLERHMSEFMECNLNELVKHGLRALRETLPAEQDLTTKNVSIGIVGKDLEFTIYDDDDVSPFLEGLEERPQRKAQPAQPADEPAEKADEPMEH</sequence>
<reference key="1">
    <citation type="submission" date="2005-06" db="EMBL/GenBank/DDBJ databases">
        <title>DNA sequences of macaque genes expressed in brain or testis and its evolutionary implications.</title>
        <authorList>
            <consortium name="International consortium for macaque cDNA sequencing and analysis"/>
        </authorList>
    </citation>
    <scope>NUCLEOTIDE SEQUENCE [LARGE SCALE MRNA]</scope>
    <source>
        <tissue>Testis</tissue>
    </source>
</reference>
<organism>
    <name type="scientific">Macaca fascicularis</name>
    <name type="common">Crab-eating macaque</name>
    <name type="synonym">Cynomolgus monkey</name>
    <dbReference type="NCBI Taxonomy" id="9541"/>
    <lineage>
        <taxon>Eukaryota</taxon>
        <taxon>Metazoa</taxon>
        <taxon>Chordata</taxon>
        <taxon>Craniata</taxon>
        <taxon>Vertebrata</taxon>
        <taxon>Euteleostomi</taxon>
        <taxon>Mammalia</taxon>
        <taxon>Eutheria</taxon>
        <taxon>Euarchontoglires</taxon>
        <taxon>Primates</taxon>
        <taxon>Haplorrhini</taxon>
        <taxon>Catarrhini</taxon>
        <taxon>Cercopithecidae</taxon>
        <taxon>Cercopithecinae</taxon>
        <taxon>Macaca</taxon>
    </lineage>
</organism>
<gene>
    <name type="primary">PSMA1</name>
    <name type="ORF">QtsA-16934</name>
</gene>
<name>PSA1_MACFA</name>